<accession>B1KV69</accession>
<proteinExistence type="inferred from homology"/>
<reference key="1">
    <citation type="journal article" date="2007" name="PLoS ONE">
        <title>Analysis of the neurotoxin complex genes in Clostridium botulinum A1-A4 and B1 strains: BoNT/A3, /Ba4 and /B1 clusters are located within plasmids.</title>
        <authorList>
            <person name="Smith T.J."/>
            <person name="Hill K.K."/>
            <person name="Foley B.T."/>
            <person name="Detter J.C."/>
            <person name="Munk A.C."/>
            <person name="Bruce D.C."/>
            <person name="Doggett N.A."/>
            <person name="Smith L.A."/>
            <person name="Marks J.D."/>
            <person name="Xie G."/>
            <person name="Brettin T.S."/>
        </authorList>
    </citation>
    <scope>NUCLEOTIDE SEQUENCE [LARGE SCALE GENOMIC DNA]</scope>
    <source>
        <strain>Loch Maree / Type A3</strain>
    </source>
</reference>
<comment type="function">
    <text evidence="1">Catalyzes the formation of N(7)-methylguanine at position 46 (m7G46) in tRNA.</text>
</comment>
<comment type="catalytic activity">
    <reaction evidence="1">
        <text>guanosine(46) in tRNA + S-adenosyl-L-methionine = N(7)-methylguanosine(46) in tRNA + S-adenosyl-L-homocysteine</text>
        <dbReference type="Rhea" id="RHEA:42708"/>
        <dbReference type="Rhea" id="RHEA-COMP:10188"/>
        <dbReference type="Rhea" id="RHEA-COMP:10189"/>
        <dbReference type="ChEBI" id="CHEBI:57856"/>
        <dbReference type="ChEBI" id="CHEBI:59789"/>
        <dbReference type="ChEBI" id="CHEBI:74269"/>
        <dbReference type="ChEBI" id="CHEBI:74480"/>
        <dbReference type="EC" id="2.1.1.33"/>
    </reaction>
</comment>
<comment type="pathway">
    <text evidence="1">tRNA modification; N(7)-methylguanine-tRNA biosynthesis.</text>
</comment>
<comment type="similarity">
    <text evidence="1">Belongs to the class I-like SAM-binding methyltransferase superfamily. TrmB family.</text>
</comment>
<gene>
    <name evidence="1" type="primary">trmB</name>
    <name type="ordered locus">CLK_3710</name>
</gene>
<name>TRMB_CLOBM</name>
<protein>
    <recommendedName>
        <fullName evidence="1">tRNA (guanine-N(7)-)-methyltransferase</fullName>
        <ecNumber evidence="1">2.1.1.33</ecNumber>
    </recommendedName>
    <alternativeName>
        <fullName evidence="1">tRNA (guanine(46)-N(7))-methyltransferase</fullName>
    </alternativeName>
    <alternativeName>
        <fullName evidence="1">tRNA(m7G46)-methyltransferase</fullName>
    </alternativeName>
</protein>
<organism>
    <name type="scientific">Clostridium botulinum (strain Loch Maree / Type A3)</name>
    <dbReference type="NCBI Taxonomy" id="498214"/>
    <lineage>
        <taxon>Bacteria</taxon>
        <taxon>Bacillati</taxon>
        <taxon>Bacillota</taxon>
        <taxon>Clostridia</taxon>
        <taxon>Eubacteriales</taxon>
        <taxon>Clostridiaceae</taxon>
        <taxon>Clostridium</taxon>
    </lineage>
</organism>
<sequence>MRLRKKWWARPEIEASDKFADEPKELRGKWNKEFNNNNDIHLELGCGRGGFISQLVEKNKDINYVGIDLKDEVIVYAIRKVKEKEEEVKREFKNIKFVTMNIMGIAEVFDKNEISKIYINFCNPWPKERHNKRRLTHTKLLTEYKKFLKPNTEIWFKTDDKELFEDSQEYFKESGFNIEYITYDLHNSDFKENIKTEYETKFETMGMKIMFLKARLL</sequence>
<keyword id="KW-0489">Methyltransferase</keyword>
<keyword id="KW-0949">S-adenosyl-L-methionine</keyword>
<keyword id="KW-0808">Transferase</keyword>
<keyword id="KW-0819">tRNA processing</keyword>
<dbReference type="EC" id="2.1.1.33" evidence="1"/>
<dbReference type="EMBL" id="CP000962">
    <property type="protein sequence ID" value="ACA55013.1"/>
    <property type="molecule type" value="Genomic_DNA"/>
</dbReference>
<dbReference type="RefSeq" id="WP_012343045.1">
    <property type="nucleotide sequence ID" value="NC_010520.1"/>
</dbReference>
<dbReference type="SMR" id="B1KV69"/>
<dbReference type="KEGG" id="cbl:CLK_3710"/>
<dbReference type="HOGENOM" id="CLU_050910_2_1_9"/>
<dbReference type="UniPathway" id="UPA00989"/>
<dbReference type="GO" id="GO:0043527">
    <property type="term" value="C:tRNA methyltransferase complex"/>
    <property type="evidence" value="ECO:0007669"/>
    <property type="project" value="TreeGrafter"/>
</dbReference>
<dbReference type="GO" id="GO:0008176">
    <property type="term" value="F:tRNA (guanine(46)-N7)-methyltransferase activity"/>
    <property type="evidence" value="ECO:0007669"/>
    <property type="project" value="UniProtKB-UniRule"/>
</dbReference>
<dbReference type="FunFam" id="3.40.50.150:FF:000396">
    <property type="entry name" value="tRNA (guanine-N(7)-)-methyltransferase"/>
    <property type="match status" value="1"/>
</dbReference>
<dbReference type="Gene3D" id="3.40.50.150">
    <property type="entry name" value="Vaccinia Virus protein VP39"/>
    <property type="match status" value="1"/>
</dbReference>
<dbReference type="HAMAP" id="MF_01057">
    <property type="entry name" value="tRNA_methyltr_TrmB"/>
    <property type="match status" value="1"/>
</dbReference>
<dbReference type="InterPro" id="IPR029063">
    <property type="entry name" value="SAM-dependent_MTases_sf"/>
</dbReference>
<dbReference type="InterPro" id="IPR003358">
    <property type="entry name" value="tRNA_(Gua-N-7)_MeTrfase_Trmb"/>
</dbReference>
<dbReference type="InterPro" id="IPR055361">
    <property type="entry name" value="tRNA_methyltr_TrmB_bact"/>
</dbReference>
<dbReference type="NCBIfam" id="NF001080">
    <property type="entry name" value="PRK00121.2-2"/>
    <property type="match status" value="1"/>
</dbReference>
<dbReference type="NCBIfam" id="TIGR00091">
    <property type="entry name" value="tRNA (guanosine(46)-N7)-methyltransferase TrmB"/>
    <property type="match status" value="1"/>
</dbReference>
<dbReference type="PANTHER" id="PTHR23417">
    <property type="entry name" value="3-DEOXY-D-MANNO-OCTULOSONIC-ACID TRANSFERASE/TRNA GUANINE-N 7 - -METHYLTRANSFERASE"/>
    <property type="match status" value="1"/>
</dbReference>
<dbReference type="PANTHER" id="PTHR23417:SF14">
    <property type="entry name" value="PENTACOTRIPEPTIDE-REPEAT REGION OF PRORP DOMAIN-CONTAINING PROTEIN"/>
    <property type="match status" value="1"/>
</dbReference>
<dbReference type="Pfam" id="PF02390">
    <property type="entry name" value="Methyltransf_4"/>
    <property type="match status" value="1"/>
</dbReference>
<dbReference type="SUPFAM" id="SSF53335">
    <property type="entry name" value="S-adenosyl-L-methionine-dependent methyltransferases"/>
    <property type="match status" value="1"/>
</dbReference>
<dbReference type="PROSITE" id="PS51625">
    <property type="entry name" value="SAM_MT_TRMB"/>
    <property type="match status" value="1"/>
</dbReference>
<feature type="chain" id="PRO_1000136349" description="tRNA (guanine-N(7)-)-methyltransferase">
    <location>
        <begin position="1"/>
        <end position="217"/>
    </location>
</feature>
<feature type="region of interest" description="Interaction with RNA" evidence="1">
    <location>
        <begin position="129"/>
        <end position="134"/>
    </location>
</feature>
<feature type="binding site" evidence="1">
    <location>
        <position position="43"/>
    </location>
    <ligand>
        <name>S-adenosyl-L-methionine</name>
        <dbReference type="ChEBI" id="CHEBI:59789"/>
    </ligand>
</feature>
<feature type="binding site" evidence="1">
    <location>
        <position position="68"/>
    </location>
    <ligand>
        <name>S-adenosyl-L-methionine</name>
        <dbReference type="ChEBI" id="CHEBI:59789"/>
    </ligand>
</feature>
<feature type="binding site" evidence="1">
    <location>
        <position position="101"/>
    </location>
    <ligand>
        <name>S-adenosyl-L-methionine</name>
        <dbReference type="ChEBI" id="CHEBI:59789"/>
    </ligand>
</feature>
<feature type="binding site" evidence="1">
    <location>
        <position position="123"/>
    </location>
    <ligand>
        <name>S-adenosyl-L-methionine</name>
        <dbReference type="ChEBI" id="CHEBI:59789"/>
    </ligand>
</feature>
<feature type="binding site" evidence="1">
    <location>
        <position position="127"/>
    </location>
    <ligand>
        <name>substrate</name>
    </ligand>
</feature>
<feature type="binding site" evidence="1">
    <location>
        <position position="159"/>
    </location>
    <ligand>
        <name>substrate</name>
    </ligand>
</feature>
<feature type="binding site" evidence="1">
    <location>
        <begin position="196"/>
        <end position="199"/>
    </location>
    <ligand>
        <name>substrate</name>
    </ligand>
</feature>
<evidence type="ECO:0000255" key="1">
    <source>
        <dbReference type="HAMAP-Rule" id="MF_01057"/>
    </source>
</evidence>